<feature type="chain" id="PRO_0000226457" description="ATP-dependent Clp protease proteolytic subunit 2">
    <location>
        <begin position="1"/>
        <end position="200"/>
    </location>
</feature>
<feature type="active site" description="Nucleophile" evidence="1">
    <location>
        <position position="101"/>
    </location>
</feature>
<feature type="active site" evidence="1">
    <location>
        <position position="126"/>
    </location>
</feature>
<accession>Q46JF7</accession>
<proteinExistence type="inferred from homology"/>
<dbReference type="EC" id="3.4.21.92" evidence="1"/>
<dbReference type="EMBL" id="CP000095">
    <property type="protein sequence ID" value="AAZ58371.1"/>
    <property type="molecule type" value="Genomic_DNA"/>
</dbReference>
<dbReference type="RefSeq" id="WP_011295228.1">
    <property type="nucleotide sequence ID" value="NC_007335.2"/>
</dbReference>
<dbReference type="SMR" id="Q46JF7"/>
<dbReference type="STRING" id="59920.PMN2A_0880"/>
<dbReference type="MEROPS" id="S14.001"/>
<dbReference type="KEGG" id="pmn:PMN2A_0880"/>
<dbReference type="HOGENOM" id="CLU_058707_3_2_3"/>
<dbReference type="OrthoDB" id="571524at2"/>
<dbReference type="PhylomeDB" id="Q46JF7"/>
<dbReference type="Proteomes" id="UP000002535">
    <property type="component" value="Chromosome"/>
</dbReference>
<dbReference type="GO" id="GO:0005737">
    <property type="term" value="C:cytoplasm"/>
    <property type="evidence" value="ECO:0007669"/>
    <property type="project" value="UniProtKB-SubCell"/>
</dbReference>
<dbReference type="GO" id="GO:0009368">
    <property type="term" value="C:endopeptidase Clp complex"/>
    <property type="evidence" value="ECO:0007669"/>
    <property type="project" value="TreeGrafter"/>
</dbReference>
<dbReference type="GO" id="GO:0004176">
    <property type="term" value="F:ATP-dependent peptidase activity"/>
    <property type="evidence" value="ECO:0007669"/>
    <property type="project" value="InterPro"/>
</dbReference>
<dbReference type="GO" id="GO:0051117">
    <property type="term" value="F:ATPase binding"/>
    <property type="evidence" value="ECO:0007669"/>
    <property type="project" value="TreeGrafter"/>
</dbReference>
<dbReference type="GO" id="GO:0004252">
    <property type="term" value="F:serine-type endopeptidase activity"/>
    <property type="evidence" value="ECO:0007669"/>
    <property type="project" value="UniProtKB-UniRule"/>
</dbReference>
<dbReference type="GO" id="GO:0006515">
    <property type="term" value="P:protein quality control for misfolded or incompletely synthesized proteins"/>
    <property type="evidence" value="ECO:0007669"/>
    <property type="project" value="TreeGrafter"/>
</dbReference>
<dbReference type="CDD" id="cd07017">
    <property type="entry name" value="S14_ClpP_2"/>
    <property type="match status" value="1"/>
</dbReference>
<dbReference type="FunFam" id="3.90.226.10:FF:000001">
    <property type="entry name" value="ATP-dependent Clp protease proteolytic subunit"/>
    <property type="match status" value="1"/>
</dbReference>
<dbReference type="Gene3D" id="3.90.226.10">
    <property type="entry name" value="2-enoyl-CoA Hydratase, Chain A, domain 1"/>
    <property type="match status" value="1"/>
</dbReference>
<dbReference type="HAMAP" id="MF_00444">
    <property type="entry name" value="ClpP"/>
    <property type="match status" value="1"/>
</dbReference>
<dbReference type="InterPro" id="IPR001907">
    <property type="entry name" value="ClpP"/>
</dbReference>
<dbReference type="InterPro" id="IPR029045">
    <property type="entry name" value="ClpP/crotonase-like_dom_sf"/>
</dbReference>
<dbReference type="InterPro" id="IPR023562">
    <property type="entry name" value="ClpP/TepA"/>
</dbReference>
<dbReference type="InterPro" id="IPR033135">
    <property type="entry name" value="ClpP_His_AS"/>
</dbReference>
<dbReference type="InterPro" id="IPR018215">
    <property type="entry name" value="ClpP_Ser_AS"/>
</dbReference>
<dbReference type="NCBIfam" id="NF001368">
    <property type="entry name" value="PRK00277.1"/>
    <property type="match status" value="1"/>
</dbReference>
<dbReference type="NCBIfam" id="NF009205">
    <property type="entry name" value="PRK12553.1"/>
    <property type="match status" value="1"/>
</dbReference>
<dbReference type="PANTHER" id="PTHR10381">
    <property type="entry name" value="ATP-DEPENDENT CLP PROTEASE PROTEOLYTIC SUBUNIT"/>
    <property type="match status" value="1"/>
</dbReference>
<dbReference type="PANTHER" id="PTHR10381:SF70">
    <property type="entry name" value="ATP-DEPENDENT CLP PROTEASE PROTEOLYTIC SUBUNIT"/>
    <property type="match status" value="1"/>
</dbReference>
<dbReference type="Pfam" id="PF00574">
    <property type="entry name" value="CLP_protease"/>
    <property type="match status" value="1"/>
</dbReference>
<dbReference type="PRINTS" id="PR00127">
    <property type="entry name" value="CLPPROTEASEP"/>
</dbReference>
<dbReference type="SUPFAM" id="SSF52096">
    <property type="entry name" value="ClpP/crotonase"/>
    <property type="match status" value="1"/>
</dbReference>
<dbReference type="PROSITE" id="PS00382">
    <property type="entry name" value="CLP_PROTEASE_HIS"/>
    <property type="match status" value="1"/>
</dbReference>
<dbReference type="PROSITE" id="PS00381">
    <property type="entry name" value="CLP_PROTEASE_SER"/>
    <property type="match status" value="1"/>
</dbReference>
<name>CLPP2_PROMT</name>
<protein>
    <recommendedName>
        <fullName evidence="1">ATP-dependent Clp protease proteolytic subunit 2</fullName>
        <ecNumber evidence="1">3.4.21.92</ecNumber>
    </recommendedName>
    <alternativeName>
        <fullName evidence="1">Endopeptidase Clp 2</fullName>
    </alternativeName>
</protein>
<reference key="1">
    <citation type="journal article" date="2007" name="PLoS Genet.">
        <title>Patterns and implications of gene gain and loss in the evolution of Prochlorococcus.</title>
        <authorList>
            <person name="Kettler G.C."/>
            <person name="Martiny A.C."/>
            <person name="Huang K."/>
            <person name="Zucker J."/>
            <person name="Coleman M.L."/>
            <person name="Rodrigue S."/>
            <person name="Chen F."/>
            <person name="Lapidus A."/>
            <person name="Ferriera S."/>
            <person name="Johnson J."/>
            <person name="Steglich C."/>
            <person name="Church G.M."/>
            <person name="Richardson P."/>
            <person name="Chisholm S.W."/>
        </authorList>
    </citation>
    <scope>NUCLEOTIDE SEQUENCE [LARGE SCALE GENOMIC DNA]</scope>
    <source>
        <strain>NATL2A</strain>
    </source>
</reference>
<evidence type="ECO:0000255" key="1">
    <source>
        <dbReference type="HAMAP-Rule" id="MF_00444"/>
    </source>
</evidence>
<keyword id="KW-0963">Cytoplasm</keyword>
<keyword id="KW-0378">Hydrolase</keyword>
<keyword id="KW-0645">Protease</keyword>
<keyword id="KW-1185">Reference proteome</keyword>
<keyword id="KW-0720">Serine protease</keyword>
<gene>
    <name evidence="1" type="primary">clpP2</name>
    <name type="ordered locus">PMN2A_0880</name>
</gene>
<organism>
    <name type="scientific">Prochlorococcus marinus (strain NATL2A)</name>
    <dbReference type="NCBI Taxonomy" id="59920"/>
    <lineage>
        <taxon>Bacteria</taxon>
        <taxon>Bacillati</taxon>
        <taxon>Cyanobacteriota</taxon>
        <taxon>Cyanophyceae</taxon>
        <taxon>Synechococcales</taxon>
        <taxon>Prochlorococcaceae</taxon>
        <taxon>Prochlorococcus</taxon>
    </lineage>
</organism>
<sequence length="200" mass="22125">MPIGTPSVPYRLPGSQFERWVDIYTRLGAERILFLGQEVNDGIANSLVAQMLYLDSEDSSKPIYLYINSPGGSVTAGLAIYDTMKYVKSDLVTICVGLAASMGAFLLSAGTKGKRLALPHSRIMIHQPLGGTAQRQASDIEIEAREILRIKEMLNKSMAEMTGQTYEKIEKDTDRDYFLSAEEAKNYGLIDRVITHPSES</sequence>
<comment type="function">
    <text evidence="1">Cleaves peptides in various proteins in a process that requires ATP hydrolysis. Has a chymotrypsin-like activity. Plays a major role in the degradation of misfolded proteins.</text>
</comment>
<comment type="catalytic activity">
    <reaction evidence="1">
        <text>Hydrolysis of proteins to small peptides in the presence of ATP and magnesium. alpha-casein is the usual test substrate. In the absence of ATP, only oligopeptides shorter than five residues are hydrolyzed (such as succinyl-Leu-Tyr-|-NHMec, and Leu-Tyr-Leu-|-Tyr-Trp, in which cleavage of the -Tyr-|-Leu- and -Tyr-|-Trp bonds also occurs).</text>
        <dbReference type="EC" id="3.4.21.92"/>
    </reaction>
</comment>
<comment type="subunit">
    <text evidence="1">Fourteen ClpP subunits assemble into 2 heptameric rings which stack back to back to give a disk-like structure with a central cavity, resembling the structure of eukaryotic proteasomes.</text>
</comment>
<comment type="subcellular location">
    <subcellularLocation>
        <location evidence="1">Cytoplasm</location>
    </subcellularLocation>
</comment>
<comment type="similarity">
    <text evidence="1">Belongs to the peptidase S14 family.</text>
</comment>